<feature type="chain" id="PRO_0000256481" description="1-deoxy-D-xylulose-5-phosphate synthase">
    <location>
        <begin position="1"/>
        <end position="620"/>
    </location>
</feature>
<feature type="binding site" evidence="1">
    <location>
        <position position="80"/>
    </location>
    <ligand>
        <name>thiamine diphosphate</name>
        <dbReference type="ChEBI" id="CHEBI:58937"/>
    </ligand>
</feature>
<feature type="binding site" evidence="1">
    <location>
        <begin position="121"/>
        <end position="123"/>
    </location>
    <ligand>
        <name>thiamine diphosphate</name>
        <dbReference type="ChEBI" id="CHEBI:58937"/>
    </ligand>
</feature>
<feature type="binding site" evidence="1">
    <location>
        <position position="152"/>
    </location>
    <ligand>
        <name>Mg(2+)</name>
        <dbReference type="ChEBI" id="CHEBI:18420"/>
    </ligand>
</feature>
<feature type="binding site" evidence="1">
    <location>
        <begin position="153"/>
        <end position="154"/>
    </location>
    <ligand>
        <name>thiamine diphosphate</name>
        <dbReference type="ChEBI" id="CHEBI:58937"/>
    </ligand>
</feature>
<feature type="binding site" evidence="1">
    <location>
        <position position="181"/>
    </location>
    <ligand>
        <name>Mg(2+)</name>
        <dbReference type="ChEBI" id="CHEBI:18420"/>
    </ligand>
</feature>
<feature type="binding site" evidence="1">
    <location>
        <position position="181"/>
    </location>
    <ligand>
        <name>thiamine diphosphate</name>
        <dbReference type="ChEBI" id="CHEBI:58937"/>
    </ligand>
</feature>
<feature type="binding site" evidence="1">
    <location>
        <position position="288"/>
    </location>
    <ligand>
        <name>thiamine diphosphate</name>
        <dbReference type="ChEBI" id="CHEBI:58937"/>
    </ligand>
</feature>
<feature type="binding site" evidence="1">
    <location>
        <position position="370"/>
    </location>
    <ligand>
        <name>thiamine diphosphate</name>
        <dbReference type="ChEBI" id="CHEBI:58937"/>
    </ligand>
</feature>
<keyword id="KW-0414">Isoprene biosynthesis</keyword>
<keyword id="KW-0460">Magnesium</keyword>
<keyword id="KW-0479">Metal-binding</keyword>
<keyword id="KW-0784">Thiamine biosynthesis</keyword>
<keyword id="KW-0786">Thiamine pyrophosphate</keyword>
<keyword id="KW-0808">Transferase</keyword>
<gene>
    <name evidence="1" type="primary">dxs</name>
    <name type="ordered locus">SCH_0463</name>
</gene>
<organism>
    <name type="scientific">Salmonella choleraesuis (strain SC-B67)</name>
    <dbReference type="NCBI Taxonomy" id="321314"/>
    <lineage>
        <taxon>Bacteria</taxon>
        <taxon>Pseudomonadati</taxon>
        <taxon>Pseudomonadota</taxon>
        <taxon>Gammaproteobacteria</taxon>
        <taxon>Enterobacterales</taxon>
        <taxon>Enterobacteriaceae</taxon>
        <taxon>Salmonella</taxon>
    </lineage>
</organism>
<evidence type="ECO:0000255" key="1">
    <source>
        <dbReference type="HAMAP-Rule" id="MF_00315"/>
    </source>
</evidence>
<dbReference type="EC" id="2.2.1.7" evidence="1"/>
<dbReference type="EMBL" id="AE017220">
    <property type="protein sequence ID" value="AAX64369.1"/>
    <property type="molecule type" value="Genomic_DNA"/>
</dbReference>
<dbReference type="RefSeq" id="WP_000006777.1">
    <property type="nucleotide sequence ID" value="NC_006905.1"/>
</dbReference>
<dbReference type="SMR" id="Q57SE2"/>
<dbReference type="KEGG" id="sec:SCH_0463"/>
<dbReference type="HOGENOM" id="CLU_009227_1_4_6"/>
<dbReference type="UniPathway" id="UPA00064">
    <property type="reaction ID" value="UER00091"/>
</dbReference>
<dbReference type="Proteomes" id="UP000000538">
    <property type="component" value="Chromosome"/>
</dbReference>
<dbReference type="GO" id="GO:0005829">
    <property type="term" value="C:cytosol"/>
    <property type="evidence" value="ECO:0007669"/>
    <property type="project" value="TreeGrafter"/>
</dbReference>
<dbReference type="GO" id="GO:0008661">
    <property type="term" value="F:1-deoxy-D-xylulose-5-phosphate synthase activity"/>
    <property type="evidence" value="ECO:0007669"/>
    <property type="project" value="UniProtKB-UniRule"/>
</dbReference>
<dbReference type="GO" id="GO:0000287">
    <property type="term" value="F:magnesium ion binding"/>
    <property type="evidence" value="ECO:0007669"/>
    <property type="project" value="UniProtKB-UniRule"/>
</dbReference>
<dbReference type="GO" id="GO:0030976">
    <property type="term" value="F:thiamine pyrophosphate binding"/>
    <property type="evidence" value="ECO:0007669"/>
    <property type="project" value="UniProtKB-UniRule"/>
</dbReference>
<dbReference type="GO" id="GO:0052865">
    <property type="term" value="P:1-deoxy-D-xylulose 5-phosphate biosynthetic process"/>
    <property type="evidence" value="ECO:0007669"/>
    <property type="project" value="UniProtKB-UniPathway"/>
</dbReference>
<dbReference type="GO" id="GO:0019288">
    <property type="term" value="P:isopentenyl diphosphate biosynthetic process, methylerythritol 4-phosphate pathway"/>
    <property type="evidence" value="ECO:0007669"/>
    <property type="project" value="TreeGrafter"/>
</dbReference>
<dbReference type="GO" id="GO:0016114">
    <property type="term" value="P:terpenoid biosynthetic process"/>
    <property type="evidence" value="ECO:0007669"/>
    <property type="project" value="UniProtKB-UniRule"/>
</dbReference>
<dbReference type="GO" id="GO:0009228">
    <property type="term" value="P:thiamine biosynthetic process"/>
    <property type="evidence" value="ECO:0007669"/>
    <property type="project" value="UniProtKB-UniRule"/>
</dbReference>
<dbReference type="CDD" id="cd02007">
    <property type="entry name" value="TPP_DXS"/>
    <property type="match status" value="1"/>
</dbReference>
<dbReference type="CDD" id="cd07033">
    <property type="entry name" value="TPP_PYR_DXS_TK_like"/>
    <property type="match status" value="1"/>
</dbReference>
<dbReference type="FunFam" id="3.40.50.920:FF:000002">
    <property type="entry name" value="1-deoxy-D-xylulose-5-phosphate synthase"/>
    <property type="match status" value="1"/>
</dbReference>
<dbReference type="FunFam" id="3.40.50.970:FF:000005">
    <property type="entry name" value="1-deoxy-D-xylulose-5-phosphate synthase"/>
    <property type="match status" value="1"/>
</dbReference>
<dbReference type="Gene3D" id="3.40.50.920">
    <property type="match status" value="1"/>
</dbReference>
<dbReference type="Gene3D" id="3.40.50.970">
    <property type="match status" value="2"/>
</dbReference>
<dbReference type="HAMAP" id="MF_00315">
    <property type="entry name" value="DXP_synth"/>
    <property type="match status" value="1"/>
</dbReference>
<dbReference type="InterPro" id="IPR005477">
    <property type="entry name" value="Dxylulose-5-P_synthase"/>
</dbReference>
<dbReference type="InterPro" id="IPR029061">
    <property type="entry name" value="THDP-binding"/>
</dbReference>
<dbReference type="InterPro" id="IPR009014">
    <property type="entry name" value="Transketo_C/PFOR_II"/>
</dbReference>
<dbReference type="InterPro" id="IPR005475">
    <property type="entry name" value="Transketolase-like_Pyr-bd"/>
</dbReference>
<dbReference type="InterPro" id="IPR020826">
    <property type="entry name" value="Transketolase_BS"/>
</dbReference>
<dbReference type="InterPro" id="IPR033248">
    <property type="entry name" value="Transketolase_C"/>
</dbReference>
<dbReference type="InterPro" id="IPR049557">
    <property type="entry name" value="Transketolase_CS"/>
</dbReference>
<dbReference type="NCBIfam" id="TIGR00204">
    <property type="entry name" value="dxs"/>
    <property type="match status" value="1"/>
</dbReference>
<dbReference type="NCBIfam" id="NF003933">
    <property type="entry name" value="PRK05444.2-2"/>
    <property type="match status" value="1"/>
</dbReference>
<dbReference type="PANTHER" id="PTHR43322">
    <property type="entry name" value="1-D-DEOXYXYLULOSE 5-PHOSPHATE SYNTHASE-RELATED"/>
    <property type="match status" value="1"/>
</dbReference>
<dbReference type="PANTHER" id="PTHR43322:SF5">
    <property type="entry name" value="1-DEOXY-D-XYLULOSE-5-PHOSPHATE SYNTHASE, CHLOROPLASTIC"/>
    <property type="match status" value="1"/>
</dbReference>
<dbReference type="Pfam" id="PF13292">
    <property type="entry name" value="DXP_synthase_N"/>
    <property type="match status" value="1"/>
</dbReference>
<dbReference type="Pfam" id="PF02779">
    <property type="entry name" value="Transket_pyr"/>
    <property type="match status" value="1"/>
</dbReference>
<dbReference type="Pfam" id="PF02780">
    <property type="entry name" value="Transketolase_C"/>
    <property type="match status" value="1"/>
</dbReference>
<dbReference type="SMART" id="SM00861">
    <property type="entry name" value="Transket_pyr"/>
    <property type="match status" value="1"/>
</dbReference>
<dbReference type="SUPFAM" id="SSF52518">
    <property type="entry name" value="Thiamin diphosphate-binding fold (THDP-binding)"/>
    <property type="match status" value="2"/>
</dbReference>
<dbReference type="SUPFAM" id="SSF52922">
    <property type="entry name" value="TK C-terminal domain-like"/>
    <property type="match status" value="1"/>
</dbReference>
<dbReference type="PROSITE" id="PS00801">
    <property type="entry name" value="TRANSKETOLASE_1"/>
    <property type="match status" value="1"/>
</dbReference>
<dbReference type="PROSITE" id="PS00802">
    <property type="entry name" value="TRANSKETOLASE_2"/>
    <property type="match status" value="1"/>
</dbReference>
<comment type="function">
    <text evidence="1">Catalyzes the acyloin condensation reaction between C atoms 2 and 3 of pyruvate and glyceraldehyde 3-phosphate to yield 1-deoxy-D-xylulose-5-phosphate (DXP).</text>
</comment>
<comment type="catalytic activity">
    <reaction evidence="1">
        <text>D-glyceraldehyde 3-phosphate + pyruvate + H(+) = 1-deoxy-D-xylulose 5-phosphate + CO2</text>
        <dbReference type="Rhea" id="RHEA:12605"/>
        <dbReference type="ChEBI" id="CHEBI:15361"/>
        <dbReference type="ChEBI" id="CHEBI:15378"/>
        <dbReference type="ChEBI" id="CHEBI:16526"/>
        <dbReference type="ChEBI" id="CHEBI:57792"/>
        <dbReference type="ChEBI" id="CHEBI:59776"/>
        <dbReference type="EC" id="2.2.1.7"/>
    </reaction>
</comment>
<comment type="cofactor">
    <cofactor evidence="1">
        <name>Mg(2+)</name>
        <dbReference type="ChEBI" id="CHEBI:18420"/>
    </cofactor>
    <text evidence="1">Binds 1 Mg(2+) ion per subunit.</text>
</comment>
<comment type="cofactor">
    <cofactor evidence="1">
        <name>thiamine diphosphate</name>
        <dbReference type="ChEBI" id="CHEBI:58937"/>
    </cofactor>
    <text evidence="1">Binds 1 thiamine pyrophosphate per subunit.</text>
</comment>
<comment type="pathway">
    <text evidence="1">Metabolic intermediate biosynthesis; 1-deoxy-D-xylulose 5-phosphate biosynthesis; 1-deoxy-D-xylulose 5-phosphate from D-glyceraldehyde 3-phosphate and pyruvate: step 1/1.</text>
</comment>
<comment type="subunit">
    <text evidence="1">Homodimer.</text>
</comment>
<comment type="similarity">
    <text evidence="1">Belongs to the transketolase family. DXPS subfamily.</text>
</comment>
<accession>Q57SE2</accession>
<reference key="1">
    <citation type="journal article" date="2005" name="Nucleic Acids Res.">
        <title>The genome sequence of Salmonella enterica serovar Choleraesuis, a highly invasive and resistant zoonotic pathogen.</title>
        <authorList>
            <person name="Chiu C.-H."/>
            <person name="Tang P."/>
            <person name="Chu C."/>
            <person name="Hu S."/>
            <person name="Bao Q."/>
            <person name="Yu J."/>
            <person name="Chou Y.-Y."/>
            <person name="Wang H.-S."/>
            <person name="Lee Y.-S."/>
        </authorList>
    </citation>
    <scope>NUCLEOTIDE SEQUENCE [LARGE SCALE GENOMIC DNA]</scope>
    <source>
        <strain>SC-B67</strain>
    </source>
</reference>
<protein>
    <recommendedName>
        <fullName evidence="1">1-deoxy-D-xylulose-5-phosphate synthase</fullName>
        <ecNumber evidence="1">2.2.1.7</ecNumber>
    </recommendedName>
    <alternativeName>
        <fullName evidence="1">1-deoxyxylulose-5-phosphate synthase</fullName>
        <shortName evidence="1">DXP synthase</shortName>
        <shortName evidence="1">DXPS</shortName>
    </alternativeName>
</protein>
<proteinExistence type="inferred from homology"/>
<name>DXS_SALCH</name>
<sequence>MSFDIAKYPTLALVDSTQELRLLPKESLPKLCDELRRYLLDSVSRSSGHFASGLGTVELTVALHYVYNTPFDQLIWDVGHQAYPHKILTGRRDKIGTIRQKGGLHPFPWRGESEYDVLSVGHSSTSISAGIGIAVAAEKEGKDRRTVCVIGDGAITAGMAFEAMNHAGDIRPDMLVILNDNEMSISENVGALNNHLAQLLSGKLYSSLREGGKKVFSGVPPIKELLKRTEEHIKGMVVPGTLFEELGFNYIGPVDGHDVMGLISTLKNMRDLKGPQFLHIMTKKGRGYEPAEKDPITFHAVPKFDPSSGCLPKSSGGLPGYSKIFGDWLCETAAKDSKLMAITPAMREGSGMVEFSRKFPDRYFDVAIAEQHAVTFAAGLAIGGYKPVVAIYSTFLQRAYDQVIHDVAIQKLPVMFAIDRAGIVGADGQTHQGAFDLSYLRCIPDMVIMTPSDENECRQMLFTGYHYNDGPTAVRYPRGNAQGVALTPLEKLPIGKGLVKRHGEKLAILNFGTLMPEAAKVAEALNATLVDMRFVKPLDDTLILEMAAQHDALVTLEENAIMGGAGSGVNEVLMAHRKPVPVLNIGLPDFFIPQGTQEEARAELGLDAAGIEAKIKAWLA</sequence>